<sequence length="168" mass="19413">MGSAYHWEARRRQMALDRRRWLMAQQQQELQQKEQELKNHQEEEQQSEEKLQPHKKLNVPQPPVAKLWTSQEQPQPSQQQPSVQPPSQPPPQPSTLPQAQVWPGPQPPQPQPPPQPTQPSAQARCTQHTSKCNLQDSQRPGLMNPCQSSPIRNTGYSQLKSTNYIQQW</sequence>
<gene>
    <name evidence="3" type="primary">CCDC200</name>
</gene>
<proteinExistence type="evidence at protein level"/>
<organism>
    <name type="scientific">Homo sapiens</name>
    <name type="common">Human</name>
    <dbReference type="NCBI Taxonomy" id="9606"/>
    <lineage>
        <taxon>Eukaryota</taxon>
        <taxon>Metazoa</taxon>
        <taxon>Chordata</taxon>
        <taxon>Craniata</taxon>
        <taxon>Vertebrata</taxon>
        <taxon>Euteleostomi</taxon>
        <taxon>Mammalia</taxon>
        <taxon>Eutheria</taxon>
        <taxon>Euarchontoglires</taxon>
        <taxon>Primates</taxon>
        <taxon>Haplorrhini</taxon>
        <taxon>Catarrhini</taxon>
        <taxon>Hominidae</taxon>
        <taxon>Homo</taxon>
    </lineage>
</organism>
<name>CC200_HUMAN</name>
<dbReference type="EMBL" id="AC024051">
    <property type="status" value="NOT_ANNOTATED_CDS"/>
    <property type="molecule type" value="Genomic_DNA"/>
</dbReference>
<dbReference type="CCDS" id="CCDS92329.1"/>
<dbReference type="RefSeq" id="NP_001350183.1">
    <property type="nucleotide sequence ID" value="NM_001363254.2"/>
</dbReference>
<dbReference type="SMR" id="A0A1B0GVQ3"/>
<dbReference type="STRING" id="9606.ENSP00000490609"/>
<dbReference type="GlyGen" id="A0A1B0GVQ3">
    <property type="glycosylation" value="1 site"/>
</dbReference>
<dbReference type="BioMuta" id="LINC00854"/>
<dbReference type="MassIVE" id="A0A1B0GVQ3"/>
<dbReference type="PeptideAtlas" id="A0A1B0GVQ3"/>
<dbReference type="Ensembl" id="ENST00000594691.6">
    <property type="protein sequence ID" value="ENSP00000489996.1"/>
    <property type="gene ID" value="ENSG00000236383.9"/>
</dbReference>
<dbReference type="Ensembl" id="ENST00000636331.2">
    <property type="protein sequence ID" value="ENSP00000490609.1"/>
    <property type="gene ID" value="ENSG00000236383.9"/>
</dbReference>
<dbReference type="GeneID" id="100874261"/>
<dbReference type="MANE-Select" id="ENST00000636331.2">
    <property type="protein sequence ID" value="ENSP00000490609.1"/>
    <property type="RefSeq nucleotide sequence ID" value="NM_001363254.2"/>
    <property type="RefSeq protein sequence ID" value="NP_001350183.1"/>
</dbReference>
<dbReference type="AGR" id="HGNC:43658"/>
<dbReference type="GeneCards" id="CCDC200"/>
<dbReference type="HGNC" id="HGNC:43658">
    <property type="gene designation" value="CCDC200"/>
</dbReference>
<dbReference type="HPA" id="ENSG00000236383">
    <property type="expression patterns" value="Tissue enriched (testis)"/>
</dbReference>
<dbReference type="neXtProt" id="NX_A0A1B0GVQ3"/>
<dbReference type="OpenTargets" id="ENSG00000236383"/>
<dbReference type="VEuPathDB" id="HostDB:ENSG00000236383"/>
<dbReference type="GeneTree" id="ENSGT00850000133618"/>
<dbReference type="InParanoid" id="A0A1B0GVQ3"/>
<dbReference type="OMA" id="SSAYHWE"/>
<dbReference type="PAN-GO" id="A0A1B0GVQ3">
    <property type="GO annotations" value="0 GO annotations based on evolutionary models"/>
</dbReference>
<dbReference type="SignaLink" id="A0A1B0GVQ3"/>
<dbReference type="PRO" id="PR:A0A1B0GVQ3"/>
<dbReference type="Proteomes" id="UP000005640">
    <property type="component" value="Chromosome 17"/>
</dbReference>
<dbReference type="RNAct" id="A0A1B0GVQ3">
    <property type="molecule type" value="protein"/>
</dbReference>
<dbReference type="Bgee" id="ENSG00000236383">
    <property type="expression patterns" value="Expressed in right testis and 97 other cell types or tissues"/>
</dbReference>
<dbReference type="ExpressionAtlas" id="A0A1B0GVQ3">
    <property type="expression patterns" value="baseline and differential"/>
</dbReference>
<feature type="chain" id="PRO_0000447305" description="Coiled-coil domain-containing protein 200">
    <location>
        <begin position="1"/>
        <end position="168"/>
    </location>
</feature>
<feature type="region of interest" description="Disordered" evidence="2">
    <location>
        <begin position="23"/>
        <end position="168"/>
    </location>
</feature>
<feature type="coiled-coil region" evidence="1">
    <location>
        <begin position="16"/>
        <end position="50"/>
    </location>
</feature>
<feature type="compositionally biased region" description="Basic and acidic residues" evidence="2">
    <location>
        <begin position="31"/>
        <end position="52"/>
    </location>
</feature>
<feature type="compositionally biased region" description="Low complexity" evidence="2">
    <location>
        <begin position="70"/>
        <end position="82"/>
    </location>
</feature>
<feature type="compositionally biased region" description="Pro residues" evidence="2">
    <location>
        <begin position="83"/>
        <end position="94"/>
    </location>
</feature>
<feature type="compositionally biased region" description="Pro residues" evidence="2">
    <location>
        <begin position="104"/>
        <end position="117"/>
    </location>
</feature>
<feature type="compositionally biased region" description="Polar residues" evidence="2">
    <location>
        <begin position="124"/>
        <end position="138"/>
    </location>
</feature>
<feature type="compositionally biased region" description="Polar residues" evidence="2">
    <location>
        <begin position="145"/>
        <end position="168"/>
    </location>
</feature>
<reference key="1">
    <citation type="journal article" date="2006" name="Nature">
        <title>DNA sequence of human chromosome 17 and analysis of rearrangement in the human lineage.</title>
        <authorList>
            <person name="Zody M.C."/>
            <person name="Garber M."/>
            <person name="Adams D.J."/>
            <person name="Sharpe T."/>
            <person name="Harrow J."/>
            <person name="Lupski J.R."/>
            <person name="Nicholson C."/>
            <person name="Searle S.M."/>
            <person name="Wilming L."/>
            <person name="Young S.K."/>
            <person name="Abouelleil A."/>
            <person name="Allen N.R."/>
            <person name="Bi W."/>
            <person name="Bloom T."/>
            <person name="Borowsky M.L."/>
            <person name="Bugalter B.E."/>
            <person name="Butler J."/>
            <person name="Chang J.L."/>
            <person name="Chen C.-K."/>
            <person name="Cook A."/>
            <person name="Corum B."/>
            <person name="Cuomo C.A."/>
            <person name="de Jong P.J."/>
            <person name="DeCaprio D."/>
            <person name="Dewar K."/>
            <person name="FitzGerald M."/>
            <person name="Gilbert J."/>
            <person name="Gibson R."/>
            <person name="Gnerre S."/>
            <person name="Goldstein S."/>
            <person name="Grafham D.V."/>
            <person name="Grocock R."/>
            <person name="Hafez N."/>
            <person name="Hagopian D.S."/>
            <person name="Hart E."/>
            <person name="Norman C.H."/>
            <person name="Humphray S."/>
            <person name="Jaffe D.B."/>
            <person name="Jones M."/>
            <person name="Kamal M."/>
            <person name="Khodiyar V.K."/>
            <person name="LaButti K."/>
            <person name="Laird G."/>
            <person name="Lehoczky J."/>
            <person name="Liu X."/>
            <person name="Lokyitsang T."/>
            <person name="Loveland J."/>
            <person name="Lui A."/>
            <person name="Macdonald P."/>
            <person name="Major J.E."/>
            <person name="Matthews L."/>
            <person name="Mauceli E."/>
            <person name="McCarroll S.A."/>
            <person name="Mihalev A.H."/>
            <person name="Mudge J."/>
            <person name="Nguyen C."/>
            <person name="Nicol R."/>
            <person name="O'Leary S.B."/>
            <person name="Osoegawa K."/>
            <person name="Schwartz D.C."/>
            <person name="Shaw-Smith C."/>
            <person name="Stankiewicz P."/>
            <person name="Steward C."/>
            <person name="Swarbreck D."/>
            <person name="Venkataraman V."/>
            <person name="Whittaker C.A."/>
            <person name="Yang X."/>
            <person name="Zimmer A.R."/>
            <person name="Bradley A."/>
            <person name="Hubbard T."/>
            <person name="Birren B.W."/>
            <person name="Rogers J."/>
            <person name="Lander E.S."/>
            <person name="Nusbaum C."/>
        </authorList>
    </citation>
    <scope>NUCLEOTIDE SEQUENCE [LARGE SCALE GENOMIC DNA]</scope>
</reference>
<protein>
    <recommendedName>
        <fullName>Coiled-coil domain-containing protein 200</fullName>
    </recommendedName>
</protein>
<accession>A0A1B0GVQ3</accession>
<keyword id="KW-0175">Coiled coil</keyword>
<keyword id="KW-1267">Proteomics identification</keyword>
<keyword id="KW-1185">Reference proteome</keyword>
<evidence type="ECO:0000255" key="1"/>
<evidence type="ECO:0000256" key="2">
    <source>
        <dbReference type="SAM" id="MobiDB-lite"/>
    </source>
</evidence>
<evidence type="ECO:0000312" key="3">
    <source>
        <dbReference type="HGNC" id="HGNC:43658"/>
    </source>
</evidence>